<organism>
    <name type="scientific">Rhodopseudomonas palustris (strain BisB5)</name>
    <dbReference type="NCBI Taxonomy" id="316057"/>
    <lineage>
        <taxon>Bacteria</taxon>
        <taxon>Pseudomonadati</taxon>
        <taxon>Pseudomonadota</taxon>
        <taxon>Alphaproteobacteria</taxon>
        <taxon>Hyphomicrobiales</taxon>
        <taxon>Nitrobacteraceae</taxon>
        <taxon>Rhodopseudomonas</taxon>
    </lineage>
</organism>
<comment type="function">
    <text evidence="1">Exerts its effect at some terminal stage of cytochrome c oxidase synthesis, probably by being involved in the insertion of the copper B into subunit I.</text>
</comment>
<comment type="subcellular location">
    <subcellularLocation>
        <location evidence="1">Cell inner membrane</location>
        <topology evidence="1">Single-pass type II membrane protein</topology>
        <orientation evidence="1">Periplasmic side</orientation>
    </subcellularLocation>
</comment>
<comment type="similarity">
    <text evidence="1">Belongs to the COX11/CtaG family.</text>
</comment>
<keyword id="KW-0997">Cell inner membrane</keyword>
<keyword id="KW-1003">Cell membrane</keyword>
<keyword id="KW-0186">Copper</keyword>
<keyword id="KW-0472">Membrane</keyword>
<keyword id="KW-0735">Signal-anchor</keyword>
<keyword id="KW-0812">Transmembrane</keyword>
<keyword id="KW-1133">Transmembrane helix</keyword>
<reference key="1">
    <citation type="submission" date="2006-03" db="EMBL/GenBank/DDBJ databases">
        <title>Complete sequence of Rhodopseudomonas palustris BisB5.</title>
        <authorList>
            <consortium name="US DOE Joint Genome Institute"/>
            <person name="Copeland A."/>
            <person name="Lucas S."/>
            <person name="Lapidus A."/>
            <person name="Barry K."/>
            <person name="Detter J.C."/>
            <person name="Glavina del Rio T."/>
            <person name="Hammon N."/>
            <person name="Israni S."/>
            <person name="Dalin E."/>
            <person name="Tice H."/>
            <person name="Pitluck S."/>
            <person name="Chain P."/>
            <person name="Malfatti S."/>
            <person name="Shin M."/>
            <person name="Vergez L."/>
            <person name="Schmutz J."/>
            <person name="Larimer F."/>
            <person name="Land M."/>
            <person name="Hauser L."/>
            <person name="Pelletier D.A."/>
            <person name="Kyrpides N."/>
            <person name="Lykidis A."/>
            <person name="Oda Y."/>
            <person name="Harwood C.S."/>
            <person name="Richardson P."/>
        </authorList>
    </citation>
    <scope>NUCLEOTIDE SEQUENCE [LARGE SCALE GENOMIC DNA]</scope>
    <source>
        <strain>BisB5</strain>
    </source>
</reference>
<dbReference type="EMBL" id="CP000283">
    <property type="protein sequence ID" value="ABE38056.1"/>
    <property type="molecule type" value="Genomic_DNA"/>
</dbReference>
<dbReference type="SMR" id="Q13CY3"/>
<dbReference type="STRING" id="316057.RPD_0818"/>
<dbReference type="KEGG" id="rpd:RPD_0818"/>
<dbReference type="eggNOG" id="COG3175">
    <property type="taxonomic scope" value="Bacteria"/>
</dbReference>
<dbReference type="HOGENOM" id="CLU_045000_5_0_5"/>
<dbReference type="BioCyc" id="RPAL316057:RPD_RS04170-MONOMER"/>
<dbReference type="Proteomes" id="UP000001818">
    <property type="component" value="Chromosome"/>
</dbReference>
<dbReference type="GO" id="GO:0005886">
    <property type="term" value="C:plasma membrane"/>
    <property type="evidence" value="ECO:0007669"/>
    <property type="project" value="UniProtKB-SubCell"/>
</dbReference>
<dbReference type="GO" id="GO:0005507">
    <property type="term" value="F:copper ion binding"/>
    <property type="evidence" value="ECO:0007669"/>
    <property type="project" value="InterPro"/>
</dbReference>
<dbReference type="GO" id="GO:0008535">
    <property type="term" value="P:respiratory chain complex IV assembly"/>
    <property type="evidence" value="ECO:0007669"/>
    <property type="project" value="UniProtKB-UniRule"/>
</dbReference>
<dbReference type="FunFam" id="2.60.370.10:FF:000001">
    <property type="entry name" value="COX11 cytochrome c oxidase assembly homolog"/>
    <property type="match status" value="1"/>
</dbReference>
<dbReference type="Gene3D" id="2.60.370.10">
    <property type="entry name" value="Ctag/Cox11"/>
    <property type="match status" value="1"/>
</dbReference>
<dbReference type="HAMAP" id="MF_00155">
    <property type="entry name" value="CtaG"/>
    <property type="match status" value="1"/>
</dbReference>
<dbReference type="InterPro" id="IPR023471">
    <property type="entry name" value="CtaG/Cox11_dom_sf"/>
</dbReference>
<dbReference type="InterPro" id="IPR007533">
    <property type="entry name" value="Cyt_c_oxidase_assmbl_CtaG"/>
</dbReference>
<dbReference type="NCBIfam" id="NF003465">
    <property type="entry name" value="PRK05089.1"/>
    <property type="match status" value="1"/>
</dbReference>
<dbReference type="PANTHER" id="PTHR21320:SF3">
    <property type="entry name" value="CYTOCHROME C OXIDASE ASSEMBLY PROTEIN COX11, MITOCHONDRIAL-RELATED"/>
    <property type="match status" value="1"/>
</dbReference>
<dbReference type="PANTHER" id="PTHR21320">
    <property type="entry name" value="CYTOCHROME C OXIDASE ASSEMBLY PROTEIN COX11-RELATED"/>
    <property type="match status" value="1"/>
</dbReference>
<dbReference type="Pfam" id="PF04442">
    <property type="entry name" value="CtaG_Cox11"/>
    <property type="match status" value="1"/>
</dbReference>
<dbReference type="PIRSF" id="PIRSF005413">
    <property type="entry name" value="COX11"/>
    <property type="match status" value="1"/>
</dbReference>
<dbReference type="SUPFAM" id="SSF110111">
    <property type="entry name" value="Ctag/Cox11"/>
    <property type="match status" value="1"/>
</dbReference>
<accession>Q13CY3</accession>
<gene>
    <name evidence="1" type="primary">ctaG</name>
    <name type="ordered locus">RPD_0818</name>
</gene>
<name>COXZ_RHOPS</name>
<protein>
    <recommendedName>
        <fullName evidence="1">Cytochrome c oxidase assembly protein CtaG</fullName>
    </recommendedName>
</protein>
<sequence>MPEVQPSALPKPAPRLGRDAAVASICGFVVALMVGASFAAVPFYDWFCRTTGFNGTTQVAGSAPSSEPLARKVSVRFDSNINGLPWKFEPEQREVEVAIGQVVTVYYSVTNTSKRATTGQAAYNVTPLTVGSYFTKINCFCFTEQTLAAGETREMPVVFYVDPAFAADNENDTVKNITLSYTFYPVREPPPKPLASGEPDQRKGNL</sequence>
<proteinExistence type="inferred from homology"/>
<feature type="chain" id="PRO_0000311206" description="Cytochrome c oxidase assembly protein CtaG">
    <location>
        <begin position="1"/>
        <end position="206"/>
    </location>
</feature>
<feature type="topological domain" description="Cytoplasmic" evidence="1">
    <location>
        <begin position="1"/>
        <end position="17"/>
    </location>
</feature>
<feature type="transmembrane region" description="Helical; Signal-anchor for type II membrane protein" evidence="1">
    <location>
        <begin position="18"/>
        <end position="40"/>
    </location>
</feature>
<feature type="topological domain" description="Periplasmic" evidence="1">
    <location>
        <begin position="41"/>
        <end position="206"/>
    </location>
</feature>
<evidence type="ECO:0000255" key="1">
    <source>
        <dbReference type="HAMAP-Rule" id="MF_00155"/>
    </source>
</evidence>